<evidence type="ECO:0000250" key="1"/>
<evidence type="ECO:0000250" key="2">
    <source>
        <dbReference type="UniProtKB" id="Q06628"/>
    </source>
</evidence>
<evidence type="ECO:0000256" key="3">
    <source>
        <dbReference type="SAM" id="MobiDB-lite"/>
    </source>
</evidence>
<evidence type="ECO:0000305" key="4"/>
<organism>
    <name type="scientific">Saccharomyces cerevisiae (strain YJM789)</name>
    <name type="common">Baker's yeast</name>
    <dbReference type="NCBI Taxonomy" id="307796"/>
    <lineage>
        <taxon>Eukaryota</taxon>
        <taxon>Fungi</taxon>
        <taxon>Dikarya</taxon>
        <taxon>Ascomycota</taxon>
        <taxon>Saccharomycotina</taxon>
        <taxon>Saccharomycetes</taxon>
        <taxon>Saccharomycetales</taxon>
        <taxon>Saccharomycetaceae</taxon>
        <taxon>Saccharomyces</taxon>
    </lineage>
</organism>
<proteinExistence type="inferred from homology"/>
<keyword id="KW-0072">Autophagy</keyword>
<keyword id="KW-0963">Cytoplasm</keyword>
<keyword id="KW-0597">Phosphoprotein</keyword>
<keyword id="KW-0653">Protein transport</keyword>
<keyword id="KW-0813">Transport</keyword>
<sequence length="738" mass="83316">MVAEEDIEKQVLQLIDSFFLKTTLLICSTESSRYQSSTENIFLFDDTWFEDHSELVSELPEIISKWSHYDGRKELPPLVVETYLDLRQLNSSHLVRLKDHEGHLWNVCKGTKKQEIVMERWLIELDNSSPTFKSYSEDETDVNELSKQLVLLFRYLLTLIQLLPTTELYQLLIKSYNGPQNEGSSNPITSTGPLVSIRTCVLDGSKPILSKGRIGLSKPIINTYSNALNESNLPAHLDQKKITPVWTKFGLLRVSVSYRRDWKFEINNTNDELFSARHASVSHNSQGPQNQPEQEGQSDQDIGKRQPQFQQQQQPQQQQQQQQQQQRQHQVQTQQQRQIPDRRSLSLSPCTRANSFEPQSWQKKVYPISRPVQPFKVGSIGSQSASRNPSNSSFFNQPPVHRPSMSSNYGPQMNIEGTSVGSTSKYSSSFGNIRRHSSVKTTENAEKVSKAVKSPLQPQESQEDLMDFVKLLEEKPDLTIKKTSGNNPPNINISDSLIRYQNLKPSNDLLSEDLSVSLSMDPNHTYHRGRSDSHSPLPSISPSMHYGSLNSRMSQGANASHLIARGGGNSSTSAFNSRRNSLDKSSNKQGMSGLPPIFGGESTSYHHDNKIQKYNQLGVEEDDDDEDDRLLNQMGNSATKFKSSISPRSIDSISSSFIKSRIPIRQPYHYSQPTTAPFQAQAKFHKPANKLIDNGNRSNSNNNNHNGNDAVGVMHNDEDDQDDDLVFFMSDMNLSKEG</sequence>
<feature type="chain" id="PRO_0000317954" description="Autophagy-related protein 13">
    <location>
        <begin position="1"/>
        <end position="738"/>
    </location>
</feature>
<feature type="region of interest" description="Disordered" evidence="3">
    <location>
        <begin position="279"/>
        <end position="359"/>
    </location>
</feature>
<feature type="region of interest" description="Disordered" evidence="3">
    <location>
        <begin position="377"/>
        <end position="462"/>
    </location>
</feature>
<feature type="region of interest" description="Interaction with ATG1" evidence="1">
    <location>
        <begin position="432"/>
        <end position="520"/>
    </location>
</feature>
<feature type="region of interest" description="Disordered" evidence="3">
    <location>
        <begin position="521"/>
        <end position="605"/>
    </location>
</feature>
<feature type="region of interest" description="Disordered" evidence="3">
    <location>
        <begin position="690"/>
        <end position="719"/>
    </location>
</feature>
<feature type="compositionally biased region" description="Low complexity" evidence="3">
    <location>
        <begin position="284"/>
        <end position="297"/>
    </location>
</feature>
<feature type="compositionally biased region" description="Low complexity" evidence="3">
    <location>
        <begin position="306"/>
        <end position="338"/>
    </location>
</feature>
<feature type="compositionally biased region" description="Polar residues" evidence="3">
    <location>
        <begin position="345"/>
        <end position="359"/>
    </location>
</feature>
<feature type="compositionally biased region" description="Low complexity" evidence="3">
    <location>
        <begin position="382"/>
        <end position="399"/>
    </location>
</feature>
<feature type="compositionally biased region" description="Low complexity" evidence="3">
    <location>
        <begin position="417"/>
        <end position="429"/>
    </location>
</feature>
<feature type="compositionally biased region" description="Polar residues" evidence="3">
    <location>
        <begin position="534"/>
        <end position="558"/>
    </location>
</feature>
<feature type="compositionally biased region" description="Polar residues" evidence="3">
    <location>
        <begin position="570"/>
        <end position="579"/>
    </location>
</feature>
<feature type="compositionally biased region" description="Low complexity" evidence="3">
    <location>
        <begin position="694"/>
        <end position="708"/>
    </location>
</feature>
<feature type="modified residue" description="Phosphoserine; by PKA" evidence="2">
    <location>
        <position position="344"/>
    </location>
</feature>
<feature type="modified residue" description="Phosphoserine; by TORC1" evidence="2">
    <location>
        <position position="348"/>
    </location>
</feature>
<feature type="modified residue" description="Phosphoserine" evidence="2">
    <location>
        <position position="355"/>
    </location>
</feature>
<feature type="modified residue" description="Phosphoserine; by TORC1 and PKA" evidence="2">
    <location>
        <position position="437"/>
    </location>
</feature>
<feature type="modified residue" description="Phosphoserine; by TORC1" evidence="2">
    <location>
        <position position="438"/>
    </location>
</feature>
<feature type="modified residue" description="Phosphoserine" evidence="2">
    <location>
        <position position="461"/>
    </location>
</feature>
<feature type="modified residue" description="Phosphoserine" evidence="2">
    <location>
        <position position="496"/>
    </location>
</feature>
<feature type="modified residue" description="Phosphoserine; by TORC1" evidence="2">
    <location>
        <position position="535"/>
    </location>
</feature>
<feature type="modified residue" description="Phosphoserine; by TORC1" evidence="2">
    <location>
        <position position="541"/>
    </location>
</feature>
<feature type="modified residue" description="Phosphoserine" evidence="2">
    <location>
        <position position="554"/>
    </location>
</feature>
<feature type="modified residue" description="Phosphoserine; by PKA" evidence="2">
    <location>
        <position position="581"/>
    </location>
</feature>
<feature type="modified residue" description="Phosphoserine; by TORC1" evidence="2">
    <location>
        <position position="646"/>
    </location>
</feature>
<feature type="modified residue" description="Phosphoserine; by TORC1" evidence="2">
    <location>
        <position position="649"/>
    </location>
</feature>
<protein>
    <recommendedName>
        <fullName>Autophagy-related protein 13</fullName>
    </recommendedName>
</protein>
<comment type="function">
    <text evidence="1">Activates the ATG1 kinase in a nutritional condition dependent manner through the TOR pathway, leading to autophagy. Required for autophosphorylation of ATG1 at 'Thr-226' and its dimerization. May also be involved in the regulation of autophagy through SNF1. Involved in ATG9 and ATG23 cycling through the pre-autophagosomal structure. Also involved in cytoplasm to vacuole transport (Cvt) and more specifically in Cvt vesicle formation. Seems to play a role in the switching machinery regulating the conversion between the Cvt pathway and autophagy. Finally, ATG13 is also required for glycogen storage during stationary phase (By similarity).</text>
</comment>
<comment type="subunit">
    <text evidence="1">Hypophosphorylated form interacts with ATG1 to form the ATG1-ATG13 kinase complex. The ATG1-ATG13 complex interacts with the ATG17-ATG29-ATG31 complex through direct interaction with ATG17. Interacts with VAC8.</text>
</comment>
<comment type="subcellular location">
    <subcellularLocation>
        <location evidence="2">Cytoplasm</location>
    </subcellularLocation>
    <subcellularLocation>
        <location evidence="2">Preautophagosomal structure</location>
    </subcellularLocation>
</comment>
<comment type="PTM">
    <text evidence="1">Phosphorylated; hyperphosphorylated by the TORC1 kinase complex to repress the induction of autophagy. Starvation and TOR inactivation results in ATG13 partial dephosphorylation leading to ATG1-binding. Rephosphorylated by ATG1 during prolonged nitrogen starvation. Also phosphorylated by TPK1; TPK1 phosphorylation regulates the association of ATG13 with the PAS. Within this regulatory network, mitochondrial respiratory deficiency suppresses autophagic flux. Hyperphosphorylation in rich medium is impaired in the absence of VAC8.</text>
</comment>
<comment type="similarity">
    <text evidence="4">Belongs to the ATG13 family. Fungi subfamily.</text>
</comment>
<reference key="1">
    <citation type="journal article" date="2007" name="Proc. Natl. Acad. Sci. U.S.A.">
        <title>Genome sequencing and comparative analysis of Saccharomyces cerevisiae strain YJM789.</title>
        <authorList>
            <person name="Wei W."/>
            <person name="McCusker J.H."/>
            <person name="Hyman R.W."/>
            <person name="Jones T."/>
            <person name="Ning Y."/>
            <person name="Cao Z."/>
            <person name="Gu Z."/>
            <person name="Bruno D."/>
            <person name="Miranda M."/>
            <person name="Nguyen M."/>
            <person name="Wilhelmy J."/>
            <person name="Komp C."/>
            <person name="Tamse R."/>
            <person name="Wang X."/>
            <person name="Jia P."/>
            <person name="Luedi P."/>
            <person name="Oefner P.J."/>
            <person name="David L."/>
            <person name="Dietrich F.S."/>
            <person name="Li Y."/>
            <person name="Davis R.W."/>
            <person name="Steinmetz L.M."/>
        </authorList>
    </citation>
    <scope>NUCLEOTIDE SEQUENCE [LARGE SCALE GENOMIC DNA]</scope>
    <source>
        <strain>YJM789</strain>
    </source>
</reference>
<accession>A6ZX59</accession>
<dbReference type="EMBL" id="AAFW02000135">
    <property type="protein sequence ID" value="EDN61301.1"/>
    <property type="molecule type" value="Genomic_DNA"/>
</dbReference>
<dbReference type="SMR" id="A6ZX59"/>
<dbReference type="HOGENOM" id="CLU_411076_0_0_1"/>
<dbReference type="OrthoDB" id="30023at4893"/>
<dbReference type="Proteomes" id="UP000007060">
    <property type="component" value="Unassembled WGS sequence"/>
</dbReference>
<dbReference type="GO" id="GO:1990316">
    <property type="term" value="C:Atg1/ULK1 kinase complex"/>
    <property type="evidence" value="ECO:0007669"/>
    <property type="project" value="InterPro"/>
</dbReference>
<dbReference type="GO" id="GO:0005829">
    <property type="term" value="C:cytosol"/>
    <property type="evidence" value="ECO:0007669"/>
    <property type="project" value="TreeGrafter"/>
</dbReference>
<dbReference type="GO" id="GO:0000407">
    <property type="term" value="C:phagophore assembly site"/>
    <property type="evidence" value="ECO:0007669"/>
    <property type="project" value="UniProtKB-SubCell"/>
</dbReference>
<dbReference type="GO" id="GO:0000423">
    <property type="term" value="P:mitophagy"/>
    <property type="evidence" value="ECO:0007669"/>
    <property type="project" value="TreeGrafter"/>
</dbReference>
<dbReference type="GO" id="GO:0034727">
    <property type="term" value="P:piecemeal microautophagy of the nucleus"/>
    <property type="evidence" value="ECO:0007669"/>
    <property type="project" value="TreeGrafter"/>
</dbReference>
<dbReference type="GO" id="GO:0034497">
    <property type="term" value="P:protein localization to phagophore assembly site"/>
    <property type="evidence" value="ECO:0007669"/>
    <property type="project" value="TreeGrafter"/>
</dbReference>
<dbReference type="GO" id="GO:0015031">
    <property type="term" value="P:protein transport"/>
    <property type="evidence" value="ECO:0007669"/>
    <property type="project" value="UniProtKB-KW"/>
</dbReference>
<dbReference type="FunFam" id="3.30.900.10:FF:000013">
    <property type="entry name" value="Autophagy-related protein 13"/>
    <property type="match status" value="1"/>
</dbReference>
<dbReference type="Gene3D" id="6.10.140.1900">
    <property type="match status" value="1"/>
</dbReference>
<dbReference type="Gene3D" id="3.30.900.10">
    <property type="entry name" value="HORMA domain"/>
    <property type="match status" value="1"/>
</dbReference>
<dbReference type="InterPro" id="IPR040182">
    <property type="entry name" value="ATG13"/>
</dbReference>
<dbReference type="InterPro" id="IPR018731">
    <property type="entry name" value="Atg13_N"/>
</dbReference>
<dbReference type="InterPro" id="IPR036570">
    <property type="entry name" value="HORMA_dom_sf"/>
</dbReference>
<dbReference type="PANTHER" id="PTHR13430">
    <property type="match status" value="1"/>
</dbReference>
<dbReference type="PANTHER" id="PTHR13430:SF4">
    <property type="entry name" value="AUTOPHAGY-RELATED PROTEIN 13"/>
    <property type="match status" value="1"/>
</dbReference>
<dbReference type="Pfam" id="PF10033">
    <property type="entry name" value="ATG13"/>
    <property type="match status" value="1"/>
</dbReference>
<gene>
    <name type="primary">ATG13</name>
    <name type="synonym">APG13</name>
    <name type="ORF">SCY_5886</name>
</gene>
<name>ATG13_YEAS7</name>